<evidence type="ECO:0000255" key="1">
    <source>
        <dbReference type="HAMAP-Rule" id="MF_01622"/>
    </source>
</evidence>
<evidence type="ECO:0000305" key="2"/>
<comment type="function">
    <text evidence="1">Involved in the post-transcriptional modification of the uridine at the wobble position (U34) of tRNA(Lys), tRNA(Glu) and tRNA(Gln). Catalyzes the conversion of 2-thiouridine (S2U-RNA) to 2-selenouridine (Se2U-RNA). Acts in a two-step process involving geranylation of 2-thiouridine (S2U) to S-geranyl-2-thiouridine (geS2U) and subsequent selenation of the latter derivative to 2-selenouridine (Se2U) in the tRNA chain.</text>
</comment>
<comment type="catalytic activity">
    <reaction evidence="1">
        <text>5-methylaminomethyl-2-thiouridine(34) in tRNA + selenophosphate + (2E)-geranyl diphosphate + H2O + H(+) = 5-methylaminomethyl-2-selenouridine(34) in tRNA + (2E)-thiogeraniol + phosphate + diphosphate</text>
        <dbReference type="Rhea" id="RHEA:42716"/>
        <dbReference type="Rhea" id="RHEA-COMP:10195"/>
        <dbReference type="Rhea" id="RHEA-COMP:10196"/>
        <dbReference type="ChEBI" id="CHEBI:15377"/>
        <dbReference type="ChEBI" id="CHEBI:15378"/>
        <dbReference type="ChEBI" id="CHEBI:16144"/>
        <dbReference type="ChEBI" id="CHEBI:33019"/>
        <dbReference type="ChEBI" id="CHEBI:43474"/>
        <dbReference type="ChEBI" id="CHEBI:58057"/>
        <dbReference type="ChEBI" id="CHEBI:74455"/>
        <dbReference type="ChEBI" id="CHEBI:82743"/>
        <dbReference type="ChEBI" id="CHEBI:143703"/>
        <dbReference type="EC" id="2.9.1.3"/>
    </reaction>
    <physiologicalReaction direction="left-to-right" evidence="1">
        <dbReference type="Rhea" id="RHEA:42717"/>
    </physiologicalReaction>
</comment>
<comment type="catalytic activity">
    <reaction evidence="1">
        <text>5-methylaminomethyl-2-thiouridine(34) in tRNA + (2E)-geranyl diphosphate = 5-methylaminomethyl-S-(2E)-geranyl-thiouridine(34) in tRNA + diphosphate</text>
        <dbReference type="Rhea" id="RHEA:14085"/>
        <dbReference type="Rhea" id="RHEA-COMP:10195"/>
        <dbReference type="Rhea" id="RHEA-COMP:14654"/>
        <dbReference type="ChEBI" id="CHEBI:33019"/>
        <dbReference type="ChEBI" id="CHEBI:58057"/>
        <dbReference type="ChEBI" id="CHEBI:74455"/>
        <dbReference type="ChEBI" id="CHEBI:140632"/>
    </reaction>
    <physiologicalReaction direction="left-to-right" evidence="1">
        <dbReference type="Rhea" id="RHEA:14086"/>
    </physiologicalReaction>
</comment>
<comment type="catalytic activity">
    <reaction evidence="1">
        <text>5-methylaminomethyl-S-(2E)-geranyl-thiouridine(34) in tRNA + selenophosphate + H(+) = 5-methylaminomethyl-2-(Se-phospho)selenouridine(34) in tRNA + (2E)-thiogeraniol</text>
        <dbReference type="Rhea" id="RHEA:60172"/>
        <dbReference type="Rhea" id="RHEA-COMP:14654"/>
        <dbReference type="Rhea" id="RHEA-COMP:15523"/>
        <dbReference type="ChEBI" id="CHEBI:15378"/>
        <dbReference type="ChEBI" id="CHEBI:16144"/>
        <dbReference type="ChEBI" id="CHEBI:140632"/>
        <dbReference type="ChEBI" id="CHEBI:143702"/>
        <dbReference type="ChEBI" id="CHEBI:143703"/>
    </reaction>
    <physiologicalReaction direction="left-to-right" evidence="1">
        <dbReference type="Rhea" id="RHEA:60173"/>
    </physiologicalReaction>
</comment>
<comment type="catalytic activity">
    <reaction evidence="1">
        <text>5-methylaminomethyl-2-(Se-phospho)selenouridine(34) in tRNA + H2O = 5-methylaminomethyl-2-selenouridine(34) in tRNA + phosphate</text>
        <dbReference type="Rhea" id="RHEA:60176"/>
        <dbReference type="Rhea" id="RHEA-COMP:10196"/>
        <dbReference type="Rhea" id="RHEA-COMP:15523"/>
        <dbReference type="ChEBI" id="CHEBI:15377"/>
        <dbReference type="ChEBI" id="CHEBI:43474"/>
        <dbReference type="ChEBI" id="CHEBI:82743"/>
        <dbReference type="ChEBI" id="CHEBI:143702"/>
    </reaction>
    <physiologicalReaction direction="left-to-right" evidence="1">
        <dbReference type="Rhea" id="RHEA:60177"/>
    </physiologicalReaction>
</comment>
<comment type="subunit">
    <text evidence="1">Monomer.</text>
</comment>
<comment type="similarity">
    <text evidence="1">Belongs to the SelU family.</text>
</comment>
<comment type="sequence caution" evidence="2">
    <conflict type="erroneous initiation">
        <sequence resource="EMBL-CDS" id="AAN79095"/>
    </conflict>
</comment>
<accession>Q8FK67</accession>
<gene>
    <name evidence="1" type="primary">selU</name>
    <name type="ordered locus">c0618</name>
</gene>
<sequence>MQERHTEQDYRALLIADTPIIDVRAPIEFEQGAMPAAINLPLMNNDERAAVGICYKQQGSDAALALGHKLVAGEIRQQRMDAWRAACLQNPHGILCCARGGQRSHIVQRWLHDAGIDYPLVEGGYKALRQTAIQATIELAQKPIVLIGGCTGSGKTLLVQQQPNGVDLEGLARHRGSAFGRTLQPQLSQASFENMLAAEMLKTDAHQDLRLWVLEDESRMIGSNHLPECLRERMTQATIAVVEDPFEIRLERLNEEYFLRMHHDFTHAYGDEQGWQEYCEYLHHGLSAIKRRLGLQRYNELAARLDAALTTQLTTGSTDGHLAWLVPLLEEYYDPMYRYQLEKKAEKVVFRGEWAGSGGMG</sequence>
<feature type="chain" id="PRO_0000210861" description="tRNA 2-selenouridine synthase">
    <location>
        <begin position="1"/>
        <end position="361"/>
    </location>
</feature>
<feature type="domain" description="Rhodanese" evidence="1">
    <location>
        <begin position="14"/>
        <end position="137"/>
    </location>
</feature>
<feature type="active site" description="S-selanylcysteine intermediate" evidence="1">
    <location>
        <position position="97"/>
    </location>
</feature>
<keyword id="KW-1185">Reference proteome</keyword>
<keyword id="KW-0711">Selenium</keyword>
<keyword id="KW-0808">Transferase</keyword>
<name>SELU_ECOL6</name>
<reference key="1">
    <citation type="journal article" date="2002" name="Proc. Natl. Acad. Sci. U.S.A.">
        <title>Extensive mosaic structure revealed by the complete genome sequence of uropathogenic Escherichia coli.</title>
        <authorList>
            <person name="Welch R.A."/>
            <person name="Burland V."/>
            <person name="Plunkett G. III"/>
            <person name="Redford P."/>
            <person name="Roesch P."/>
            <person name="Rasko D."/>
            <person name="Buckles E.L."/>
            <person name="Liou S.-R."/>
            <person name="Boutin A."/>
            <person name="Hackett J."/>
            <person name="Stroud D."/>
            <person name="Mayhew G.F."/>
            <person name="Rose D.J."/>
            <person name="Zhou S."/>
            <person name="Schwartz D.C."/>
            <person name="Perna N.T."/>
            <person name="Mobley H.L.T."/>
            <person name="Donnenberg M.S."/>
            <person name="Blattner F.R."/>
        </authorList>
    </citation>
    <scope>NUCLEOTIDE SEQUENCE [LARGE SCALE GENOMIC DNA]</scope>
    <source>
        <strain>CFT073 / ATCC 700928 / UPEC</strain>
    </source>
</reference>
<protein>
    <recommendedName>
        <fullName evidence="1">tRNA 2-selenouridine synthase</fullName>
        <ecNumber evidence="1">2.9.1.3</ecNumber>
    </recommendedName>
</protein>
<organism>
    <name type="scientific">Escherichia coli O6:H1 (strain CFT073 / ATCC 700928 / UPEC)</name>
    <dbReference type="NCBI Taxonomy" id="199310"/>
    <lineage>
        <taxon>Bacteria</taxon>
        <taxon>Pseudomonadati</taxon>
        <taxon>Pseudomonadota</taxon>
        <taxon>Gammaproteobacteria</taxon>
        <taxon>Enterobacterales</taxon>
        <taxon>Enterobacteriaceae</taxon>
        <taxon>Escherichia</taxon>
    </lineage>
</organism>
<proteinExistence type="inferred from homology"/>
<dbReference type="EC" id="2.9.1.3" evidence="1"/>
<dbReference type="EMBL" id="AE014075">
    <property type="protein sequence ID" value="AAN79095.1"/>
    <property type="status" value="ALT_INIT"/>
    <property type="molecule type" value="Genomic_DNA"/>
</dbReference>
<dbReference type="SMR" id="Q8FK67"/>
<dbReference type="STRING" id="199310.c0618"/>
<dbReference type="KEGG" id="ecc:c0618"/>
<dbReference type="eggNOG" id="COG2603">
    <property type="taxonomic scope" value="Bacteria"/>
</dbReference>
<dbReference type="HOGENOM" id="CLU_043456_1_0_6"/>
<dbReference type="Proteomes" id="UP000001410">
    <property type="component" value="Chromosome"/>
</dbReference>
<dbReference type="GO" id="GO:0016765">
    <property type="term" value="F:transferase activity, transferring alkyl or aryl (other than methyl) groups"/>
    <property type="evidence" value="ECO:0007669"/>
    <property type="project" value="UniProtKB-UniRule"/>
</dbReference>
<dbReference type="GO" id="GO:0043828">
    <property type="term" value="F:tRNA 2-selenouridine synthase activity"/>
    <property type="evidence" value="ECO:0007669"/>
    <property type="project" value="UniProtKB-EC"/>
</dbReference>
<dbReference type="GO" id="GO:0002098">
    <property type="term" value="P:tRNA wobble uridine modification"/>
    <property type="evidence" value="ECO:0007669"/>
    <property type="project" value="UniProtKB-UniRule"/>
</dbReference>
<dbReference type="CDD" id="cd01520">
    <property type="entry name" value="RHOD_YbbB"/>
    <property type="match status" value="1"/>
</dbReference>
<dbReference type="FunFam" id="3.40.250.10:FF:000009">
    <property type="entry name" value="tRNA 2-selenouridine/geranyl-2-thiouridine synthase"/>
    <property type="match status" value="1"/>
</dbReference>
<dbReference type="Gene3D" id="3.40.250.10">
    <property type="entry name" value="Rhodanese-like domain"/>
    <property type="match status" value="1"/>
</dbReference>
<dbReference type="HAMAP" id="MF_01622">
    <property type="entry name" value="tRNA_sel_U_synth"/>
    <property type="match status" value="1"/>
</dbReference>
<dbReference type="InterPro" id="IPR001763">
    <property type="entry name" value="Rhodanese-like_dom"/>
</dbReference>
<dbReference type="InterPro" id="IPR036873">
    <property type="entry name" value="Rhodanese-like_dom_sf"/>
</dbReference>
<dbReference type="InterPro" id="IPR017582">
    <property type="entry name" value="SelU"/>
</dbReference>
<dbReference type="NCBIfam" id="NF008749">
    <property type="entry name" value="PRK11784.1-1"/>
    <property type="match status" value="1"/>
</dbReference>
<dbReference type="NCBIfam" id="NF008751">
    <property type="entry name" value="PRK11784.1-3"/>
    <property type="match status" value="1"/>
</dbReference>
<dbReference type="NCBIfam" id="TIGR03167">
    <property type="entry name" value="tRNA_sel_U_synt"/>
    <property type="match status" value="1"/>
</dbReference>
<dbReference type="PANTHER" id="PTHR30401">
    <property type="entry name" value="TRNA 2-SELENOURIDINE SYNTHASE"/>
    <property type="match status" value="1"/>
</dbReference>
<dbReference type="PANTHER" id="PTHR30401:SF0">
    <property type="entry name" value="TRNA 2-SELENOURIDINE SYNTHASE"/>
    <property type="match status" value="1"/>
</dbReference>
<dbReference type="SMART" id="SM00450">
    <property type="entry name" value="RHOD"/>
    <property type="match status" value="1"/>
</dbReference>
<dbReference type="SUPFAM" id="SSF52821">
    <property type="entry name" value="Rhodanese/Cell cycle control phosphatase"/>
    <property type="match status" value="1"/>
</dbReference>
<dbReference type="PROSITE" id="PS50206">
    <property type="entry name" value="RHODANESE_3"/>
    <property type="match status" value="1"/>
</dbReference>